<feature type="signal peptide">
    <location>
        <begin position="1"/>
        <end position="25"/>
    </location>
</feature>
<feature type="chain" id="PRO_0000017111" description="Lysosome-associated membrane glycoprotein 2">
    <location>
        <begin position="26"/>
        <end position="415"/>
    </location>
</feature>
<feature type="topological domain" description="Lumenal" evidence="3">
    <location>
        <begin position="26"/>
        <end position="379"/>
    </location>
</feature>
<feature type="transmembrane region" description="Helical" evidence="4">
    <location>
        <begin position="380"/>
        <end position="404"/>
    </location>
</feature>
<feature type="topological domain" description="Cytoplasmic" evidence="4">
    <location>
        <begin position="405"/>
        <end position="415"/>
    </location>
</feature>
<feature type="region of interest" description="First lumenal domain">
    <location>
        <begin position="26"/>
        <end position="188"/>
    </location>
</feature>
<feature type="region of interest" description="Hinge">
    <location>
        <begin position="189"/>
        <end position="233"/>
    </location>
</feature>
<feature type="region of interest" description="Disordered" evidence="5">
    <location>
        <begin position="202"/>
        <end position="227"/>
    </location>
</feature>
<feature type="region of interest" description="Second lumenal domain">
    <location>
        <begin position="234"/>
        <end position="379"/>
    </location>
</feature>
<feature type="region of interest" description="Important for binding and subsequent lysosomal degradation of target proteins" evidence="1">
    <location>
        <begin position="406"/>
        <end position="409"/>
    </location>
</feature>
<feature type="compositionally biased region" description="Low complexity" evidence="5">
    <location>
        <begin position="202"/>
        <end position="213"/>
    </location>
</feature>
<feature type="glycosylation site" description="N-linked (GlcNAc...) asparagine" evidence="12 17">
    <location>
        <position position="29"/>
    </location>
</feature>
<feature type="glycosylation site" description="N-linked (GlcNAc...) asparagine" evidence="12 17">
    <location>
        <position position="45"/>
    </location>
</feature>
<feature type="glycosylation site" description="N-linked (GlcNAc...) asparagine" evidence="3">
    <location>
        <position position="54"/>
    </location>
</feature>
<feature type="glycosylation site" description="N-linked (GlcNAc...) asparagine" evidence="12 17">
    <location>
        <position position="57"/>
    </location>
</feature>
<feature type="glycosylation site" description="N-linked (GlcNAc...) asparagine" evidence="12 17">
    <location>
        <position position="97"/>
    </location>
</feature>
<feature type="glycosylation site" description="N-linked (GlcNAc...) asparagine" evidence="12 17">
    <location>
        <position position="115"/>
    </location>
</feature>
<feature type="glycosylation site" description="N-linked (GlcNAc...) asparagine" evidence="3">
    <location>
        <position position="175"/>
    </location>
</feature>
<feature type="glycosylation site" description="N-linked (GlcNAc...) asparagine" evidence="3">
    <location>
        <position position="227"/>
    </location>
</feature>
<feature type="glycosylation site" description="N-linked (GlcNAc...) asparagine" evidence="3">
    <location>
        <position position="234"/>
    </location>
</feature>
<feature type="glycosylation site" description="N-linked (GlcNAc...) asparagine" evidence="3">
    <location>
        <position position="247"/>
    </location>
</feature>
<feature type="glycosylation site" description="N-linked (GlcNAc...) asparagine" evidence="3">
    <location>
        <position position="265"/>
    </location>
</feature>
<feature type="glycosylation site" description="N-linked (GlcNAc...) asparagine" evidence="3">
    <location>
        <position position="280"/>
    </location>
</feature>
<feature type="glycosylation site" description="N-linked (GlcNAc...) asparagine" evidence="3">
    <location>
        <position position="312"/>
    </location>
</feature>
<feature type="glycosylation site" description="N-linked (GlcNAc...) asparagine" evidence="3">
    <location>
        <position position="317"/>
    </location>
</feature>
<feature type="glycosylation site" description="N-linked (GlcNAc...) asparagine" evidence="3">
    <location>
        <position position="322"/>
    </location>
</feature>
<feature type="glycosylation site" description="N-linked (GlcNAc...) asparagine" evidence="3">
    <location>
        <position position="361"/>
    </location>
</feature>
<feature type="disulfide bond" evidence="4 12 17">
    <location>
        <begin position="37"/>
        <end position="75"/>
    </location>
</feature>
<feature type="disulfide bond" evidence="4 12 17">
    <location>
        <begin position="149"/>
        <end position="185"/>
    </location>
</feature>
<feature type="disulfide bond" evidence="4">
    <location>
        <begin position="237"/>
        <end position="270"/>
    </location>
</feature>
<feature type="disulfide bond" evidence="4">
    <location>
        <begin position="336"/>
        <end position="373"/>
    </location>
</feature>
<feature type="splice variant" id="VSP_003045" description="In isoform LAMP-2B." evidence="14 15">
    <original>QDCSADEDNFLVPIAVGAALGGVLILVLLAYFIGLKRHHTGYEQF</original>
    <variation>EECAADSDLNFLIPVAVGVALGFLIIAVFISYMIGRRKSRTGYQSV</variation>
    <location>
        <begin position="371"/>
        <end position="415"/>
    </location>
</feature>
<feature type="splice variant" id="VSP_003046" description="In isoform LAMP-2C." evidence="16">
    <original>DCSADEDNFLVPIAVGAALGGVLILVLLAYFIGLKRHHTGYEQF</original>
    <variation>ECSLDDDTILIPIIVGAGLSGLIIVIVIAYLIGRRKTYAGYQTL</variation>
    <location>
        <begin position="372"/>
        <end position="415"/>
    </location>
</feature>
<feature type="sequence conflict" description="In Ref. 2; BAE34951." evidence="16" ref="2">
    <original>P</original>
    <variation>H</variation>
    <location>
        <position position="272"/>
    </location>
</feature>
<feature type="sequence conflict" description="In Ref. 1; AAA39412." evidence="16" ref="1">
    <original>F</original>
    <variation>L</variation>
    <location>
        <position position="289"/>
    </location>
</feature>
<feature type="strand" evidence="18">
    <location>
        <begin position="26"/>
        <end position="32"/>
    </location>
</feature>
<feature type="strand" evidence="18">
    <location>
        <begin position="35"/>
        <end position="52"/>
    </location>
</feature>
<feature type="turn" evidence="18">
    <location>
        <begin position="53"/>
        <end position="55"/>
    </location>
</feature>
<feature type="strand" evidence="18">
    <location>
        <begin position="56"/>
        <end position="63"/>
    </location>
</feature>
<feature type="strand" evidence="18">
    <location>
        <begin position="83"/>
        <end position="88"/>
    </location>
</feature>
<feature type="turn" evidence="18">
    <location>
        <begin position="89"/>
        <end position="91"/>
    </location>
</feature>
<feature type="strand" evidence="18">
    <location>
        <begin position="92"/>
        <end position="100"/>
    </location>
</feature>
<feature type="strand" evidence="18">
    <location>
        <begin position="102"/>
        <end position="115"/>
    </location>
</feature>
<feature type="turn" evidence="18">
    <location>
        <begin position="119"/>
        <end position="121"/>
    </location>
</feature>
<feature type="strand" evidence="18">
    <location>
        <begin position="125"/>
        <end position="127"/>
    </location>
</feature>
<feature type="strand" evidence="18">
    <location>
        <begin position="129"/>
        <end position="134"/>
    </location>
</feature>
<feature type="strand" evidence="18">
    <location>
        <begin position="139"/>
        <end position="141"/>
    </location>
</feature>
<feature type="strand" evidence="18">
    <location>
        <begin position="145"/>
        <end position="149"/>
    </location>
</feature>
<feature type="strand" evidence="18">
    <location>
        <begin position="153"/>
        <end position="157"/>
    </location>
</feature>
<feature type="strand" evidence="18">
    <location>
        <begin position="160"/>
        <end position="172"/>
    </location>
</feature>
<feature type="strand" evidence="18">
    <location>
        <begin position="182"/>
        <end position="184"/>
    </location>
</feature>
<feature type="helix" evidence="18">
    <location>
        <begin position="186"/>
        <end position="188"/>
    </location>
</feature>
<organism>
    <name type="scientific">Mus musculus</name>
    <name type="common">Mouse</name>
    <dbReference type="NCBI Taxonomy" id="10090"/>
    <lineage>
        <taxon>Eukaryota</taxon>
        <taxon>Metazoa</taxon>
        <taxon>Chordata</taxon>
        <taxon>Craniata</taxon>
        <taxon>Vertebrata</taxon>
        <taxon>Euteleostomi</taxon>
        <taxon>Mammalia</taxon>
        <taxon>Eutheria</taxon>
        <taxon>Euarchontoglires</taxon>
        <taxon>Glires</taxon>
        <taxon>Rodentia</taxon>
        <taxon>Myomorpha</taxon>
        <taxon>Muroidea</taxon>
        <taxon>Muridae</taxon>
        <taxon>Murinae</taxon>
        <taxon>Mus</taxon>
        <taxon>Mus</taxon>
    </lineage>
</organism>
<proteinExistence type="evidence at protein level"/>
<keyword id="KW-0002">3D-structure</keyword>
<keyword id="KW-0025">Alternative splicing</keyword>
<keyword id="KW-0072">Autophagy</keyword>
<keyword id="KW-1003">Cell membrane</keyword>
<keyword id="KW-0968">Cytoplasmic vesicle</keyword>
<keyword id="KW-1015">Disulfide bond</keyword>
<keyword id="KW-0967">Endosome</keyword>
<keyword id="KW-0325">Glycoprotein</keyword>
<keyword id="KW-0458">Lysosome</keyword>
<keyword id="KW-0472">Membrane</keyword>
<keyword id="KW-1185">Reference proteome</keyword>
<keyword id="KW-0732">Signal</keyword>
<keyword id="KW-0812">Transmembrane</keyword>
<keyword id="KW-1133">Transmembrane helix</keyword>
<name>LAMP2_MOUSE</name>
<evidence type="ECO:0000250" key="1">
    <source>
        <dbReference type="UniProtKB" id="P13473"/>
    </source>
</evidence>
<evidence type="ECO:0000250" key="2">
    <source>
        <dbReference type="UniProtKB" id="P17046"/>
    </source>
</evidence>
<evidence type="ECO:0000255" key="3"/>
<evidence type="ECO:0000255" key="4">
    <source>
        <dbReference type="PROSITE-ProRule" id="PRU00740"/>
    </source>
</evidence>
<evidence type="ECO:0000256" key="5">
    <source>
        <dbReference type="SAM" id="MobiDB-lite"/>
    </source>
</evidence>
<evidence type="ECO:0000269" key="6">
    <source>
    </source>
</evidence>
<evidence type="ECO:0000269" key="7">
    <source>
    </source>
</evidence>
<evidence type="ECO:0000269" key="8">
    <source>
    </source>
</evidence>
<evidence type="ECO:0000269" key="9">
    <source>
    </source>
</evidence>
<evidence type="ECO:0000269" key="10">
    <source>
    </source>
</evidence>
<evidence type="ECO:0000269" key="11">
    <source>
    </source>
</evidence>
<evidence type="ECO:0000269" key="12">
    <source>
    </source>
</evidence>
<evidence type="ECO:0000269" key="13">
    <source>
    </source>
</evidence>
<evidence type="ECO:0000303" key="14">
    <source>
    </source>
</evidence>
<evidence type="ECO:0000303" key="15">
    <source>
    </source>
</evidence>
<evidence type="ECO:0000305" key="16"/>
<evidence type="ECO:0007744" key="17">
    <source>
        <dbReference type="PDB" id="5GV3"/>
    </source>
</evidence>
<evidence type="ECO:0007829" key="18">
    <source>
        <dbReference type="PDB" id="5GV3"/>
    </source>
</evidence>
<accession>P17047</accession>
<accession>A2A430</accession>
<accession>Q3TXG5</accession>
<accession>Q8BSG8</accession>
<reference key="1">
    <citation type="journal article" date="1990" name="J. Biol. Chem.">
        <title>The cDNA sequence of mouse LAMP-2. Evidence for two classes of lysosomal membrane glycoproteins.</title>
        <authorList>
            <person name="Cha Y."/>
            <person name="Holland S.M."/>
            <person name="August J.T."/>
        </authorList>
    </citation>
    <scope>NUCLEOTIDE SEQUENCE [MRNA] (ISOFORM LAMP-2A)</scope>
</reference>
<reference key="2">
    <citation type="journal article" date="2005" name="Science">
        <title>The transcriptional landscape of the mammalian genome.</title>
        <authorList>
            <person name="Carninci P."/>
            <person name="Kasukawa T."/>
            <person name="Katayama S."/>
            <person name="Gough J."/>
            <person name="Frith M.C."/>
            <person name="Maeda N."/>
            <person name="Oyama R."/>
            <person name="Ravasi T."/>
            <person name="Lenhard B."/>
            <person name="Wells C."/>
            <person name="Kodzius R."/>
            <person name="Shimokawa K."/>
            <person name="Bajic V.B."/>
            <person name="Brenner S.E."/>
            <person name="Batalov S."/>
            <person name="Forrest A.R."/>
            <person name="Zavolan M."/>
            <person name="Davis M.J."/>
            <person name="Wilming L.G."/>
            <person name="Aidinis V."/>
            <person name="Allen J.E."/>
            <person name="Ambesi-Impiombato A."/>
            <person name="Apweiler R."/>
            <person name="Aturaliya R.N."/>
            <person name="Bailey T.L."/>
            <person name="Bansal M."/>
            <person name="Baxter L."/>
            <person name="Beisel K.W."/>
            <person name="Bersano T."/>
            <person name="Bono H."/>
            <person name="Chalk A.M."/>
            <person name="Chiu K.P."/>
            <person name="Choudhary V."/>
            <person name="Christoffels A."/>
            <person name="Clutterbuck D.R."/>
            <person name="Crowe M.L."/>
            <person name="Dalla E."/>
            <person name="Dalrymple B.P."/>
            <person name="de Bono B."/>
            <person name="Della Gatta G."/>
            <person name="di Bernardo D."/>
            <person name="Down T."/>
            <person name="Engstrom P."/>
            <person name="Fagiolini M."/>
            <person name="Faulkner G."/>
            <person name="Fletcher C.F."/>
            <person name="Fukushima T."/>
            <person name="Furuno M."/>
            <person name="Futaki S."/>
            <person name="Gariboldi M."/>
            <person name="Georgii-Hemming P."/>
            <person name="Gingeras T.R."/>
            <person name="Gojobori T."/>
            <person name="Green R.E."/>
            <person name="Gustincich S."/>
            <person name="Harbers M."/>
            <person name="Hayashi Y."/>
            <person name="Hensch T.K."/>
            <person name="Hirokawa N."/>
            <person name="Hill D."/>
            <person name="Huminiecki L."/>
            <person name="Iacono M."/>
            <person name="Ikeo K."/>
            <person name="Iwama A."/>
            <person name="Ishikawa T."/>
            <person name="Jakt M."/>
            <person name="Kanapin A."/>
            <person name="Katoh M."/>
            <person name="Kawasawa Y."/>
            <person name="Kelso J."/>
            <person name="Kitamura H."/>
            <person name="Kitano H."/>
            <person name="Kollias G."/>
            <person name="Krishnan S.P."/>
            <person name="Kruger A."/>
            <person name="Kummerfeld S.K."/>
            <person name="Kurochkin I.V."/>
            <person name="Lareau L.F."/>
            <person name="Lazarevic D."/>
            <person name="Lipovich L."/>
            <person name="Liu J."/>
            <person name="Liuni S."/>
            <person name="McWilliam S."/>
            <person name="Madan Babu M."/>
            <person name="Madera M."/>
            <person name="Marchionni L."/>
            <person name="Matsuda H."/>
            <person name="Matsuzawa S."/>
            <person name="Miki H."/>
            <person name="Mignone F."/>
            <person name="Miyake S."/>
            <person name="Morris K."/>
            <person name="Mottagui-Tabar S."/>
            <person name="Mulder N."/>
            <person name="Nakano N."/>
            <person name="Nakauchi H."/>
            <person name="Ng P."/>
            <person name="Nilsson R."/>
            <person name="Nishiguchi S."/>
            <person name="Nishikawa S."/>
            <person name="Nori F."/>
            <person name="Ohara O."/>
            <person name="Okazaki Y."/>
            <person name="Orlando V."/>
            <person name="Pang K.C."/>
            <person name="Pavan W.J."/>
            <person name="Pavesi G."/>
            <person name="Pesole G."/>
            <person name="Petrovsky N."/>
            <person name="Piazza S."/>
            <person name="Reed J."/>
            <person name="Reid J.F."/>
            <person name="Ring B.Z."/>
            <person name="Ringwald M."/>
            <person name="Rost B."/>
            <person name="Ruan Y."/>
            <person name="Salzberg S.L."/>
            <person name="Sandelin A."/>
            <person name="Schneider C."/>
            <person name="Schoenbach C."/>
            <person name="Sekiguchi K."/>
            <person name="Semple C.A."/>
            <person name="Seno S."/>
            <person name="Sessa L."/>
            <person name="Sheng Y."/>
            <person name="Shibata Y."/>
            <person name="Shimada H."/>
            <person name="Shimada K."/>
            <person name="Silva D."/>
            <person name="Sinclair B."/>
            <person name="Sperling S."/>
            <person name="Stupka E."/>
            <person name="Sugiura K."/>
            <person name="Sultana R."/>
            <person name="Takenaka Y."/>
            <person name="Taki K."/>
            <person name="Tammoja K."/>
            <person name="Tan S.L."/>
            <person name="Tang S."/>
            <person name="Taylor M.S."/>
            <person name="Tegner J."/>
            <person name="Teichmann S.A."/>
            <person name="Ueda H.R."/>
            <person name="van Nimwegen E."/>
            <person name="Verardo R."/>
            <person name="Wei C.L."/>
            <person name="Yagi K."/>
            <person name="Yamanishi H."/>
            <person name="Zabarovsky E."/>
            <person name="Zhu S."/>
            <person name="Zimmer A."/>
            <person name="Hide W."/>
            <person name="Bult C."/>
            <person name="Grimmond S.M."/>
            <person name="Teasdale R.D."/>
            <person name="Liu E.T."/>
            <person name="Brusic V."/>
            <person name="Quackenbush J."/>
            <person name="Wahlestedt C."/>
            <person name="Mattick J.S."/>
            <person name="Hume D.A."/>
            <person name="Kai C."/>
            <person name="Sasaki D."/>
            <person name="Tomaru Y."/>
            <person name="Fukuda S."/>
            <person name="Kanamori-Katayama M."/>
            <person name="Suzuki M."/>
            <person name="Aoki J."/>
            <person name="Arakawa T."/>
            <person name="Iida J."/>
            <person name="Imamura K."/>
            <person name="Itoh M."/>
            <person name="Kato T."/>
            <person name="Kawaji H."/>
            <person name="Kawagashira N."/>
            <person name="Kawashima T."/>
            <person name="Kojima M."/>
            <person name="Kondo S."/>
            <person name="Konno H."/>
            <person name="Nakano K."/>
            <person name="Ninomiya N."/>
            <person name="Nishio T."/>
            <person name="Okada M."/>
            <person name="Plessy C."/>
            <person name="Shibata K."/>
            <person name="Shiraki T."/>
            <person name="Suzuki S."/>
            <person name="Tagami M."/>
            <person name="Waki K."/>
            <person name="Watahiki A."/>
            <person name="Okamura-Oho Y."/>
            <person name="Suzuki H."/>
            <person name="Kawai J."/>
            <person name="Hayashizaki Y."/>
        </authorList>
    </citation>
    <scope>NUCLEOTIDE SEQUENCE [LARGE SCALE MRNA] (ISOFORMS LAMP-2A AND LAMP-2B)</scope>
    <source>
        <strain>C57BL/6J</strain>
    </source>
</reference>
<reference key="3">
    <citation type="journal article" date="2009" name="PLoS Biol.">
        <title>Lineage-specific biology revealed by a finished genome assembly of the mouse.</title>
        <authorList>
            <person name="Church D.M."/>
            <person name="Goodstadt L."/>
            <person name="Hillier L.W."/>
            <person name="Zody M.C."/>
            <person name="Goldstein S."/>
            <person name="She X."/>
            <person name="Bult C.J."/>
            <person name="Agarwala R."/>
            <person name="Cherry J.L."/>
            <person name="DiCuccio M."/>
            <person name="Hlavina W."/>
            <person name="Kapustin Y."/>
            <person name="Meric P."/>
            <person name="Maglott D."/>
            <person name="Birtle Z."/>
            <person name="Marques A.C."/>
            <person name="Graves T."/>
            <person name="Zhou S."/>
            <person name="Teague B."/>
            <person name="Potamousis K."/>
            <person name="Churas C."/>
            <person name="Place M."/>
            <person name="Herschleb J."/>
            <person name="Runnheim R."/>
            <person name="Forrest D."/>
            <person name="Amos-Landgraf J."/>
            <person name="Schwartz D.C."/>
            <person name="Cheng Z."/>
            <person name="Lindblad-Toh K."/>
            <person name="Eichler E.E."/>
            <person name="Ponting C.P."/>
        </authorList>
    </citation>
    <scope>NUCLEOTIDE SEQUENCE [LARGE SCALE GENOMIC DNA]</scope>
    <source>
        <strain>C57BL/6J</strain>
    </source>
</reference>
<reference key="4">
    <citation type="submission" date="2005-07" db="EMBL/GenBank/DDBJ databases">
        <authorList>
            <person name="Mural R.J."/>
            <person name="Adams M.D."/>
            <person name="Myers E.W."/>
            <person name="Smith H.O."/>
            <person name="Venter J.C."/>
        </authorList>
    </citation>
    <scope>NUCLEOTIDE SEQUENCE [LARGE SCALE GENOMIC DNA]</scope>
</reference>
<reference key="5">
    <citation type="journal article" date="2004" name="Genome Res.">
        <title>The status, quality, and expansion of the NIH full-length cDNA project: the Mammalian Gene Collection (MGC).</title>
        <authorList>
            <consortium name="The MGC Project Team"/>
        </authorList>
    </citation>
    <scope>NUCLEOTIDE SEQUENCE [LARGE SCALE MRNA] (ISOFORM LAMP-2B)</scope>
</reference>
<reference key="6">
    <citation type="journal article" date="1990" name="J. Biol. Chem.">
        <title>Characterization and cloning of lgp110, a lysosomal membrane glycoprotein from mouse and rat cells.</title>
        <authorList>
            <person name="Granger B.L."/>
            <person name="Green S.A."/>
            <person name="Gabel C.A."/>
            <person name="Howe C.L."/>
            <person name="Mellman I."/>
            <person name="Helenius A."/>
        </authorList>
    </citation>
    <scope>NUCLEOTIDE SEQUENCE [GENOMIC DNA / MRNA] OF 58-128 AND 186-415</scope>
    <scope>GLYCOSYLATION</scope>
    <scope>SUBCELLULAR LOCATION</scope>
</reference>
<reference key="7">
    <citation type="journal article" date="1995" name="DNA Cell Biol.">
        <title>The family of LAMP-2 proteins arises by alternative splicing from a single gene: characterization of the avian LAMP-2 gene and identification of mammalian homologs of LAMP-2b and LAMP-2c.</title>
        <authorList>
            <person name="Gough N.R."/>
            <person name="Hatem C.L."/>
            <person name="Fambrough D.M."/>
        </authorList>
    </citation>
    <scope>ALTERNATIVE SPLICING</scope>
    <source>
        <tissue>Brain</tissue>
    </source>
</reference>
<reference key="8">
    <citation type="journal article" date="2000" name="J. Cell Sci.">
        <title>Unique properties of lamp2a compared to other lamp2 isoforms.</title>
        <authorList>
            <person name="Cuervo A.M."/>
            <person name="Dice J.F."/>
        </authorList>
    </citation>
    <scope>SUBCELLULAR LOCATION</scope>
</reference>
<reference key="9">
    <citation type="journal article" date="2000" name="Nature">
        <title>Accumulation of autophagic vacuoles and cardiomyopathy in LAMP-2-deficient mice.</title>
        <authorList>
            <person name="Tanaka Y."/>
            <person name="Guhde G."/>
            <person name="Suter A."/>
            <person name="Eskelinen E.L."/>
            <person name="Hartmann D."/>
            <person name="Luellmann-Rauch R."/>
            <person name="Janssen P.M."/>
            <person name="Blanz J."/>
            <person name="von Figura K."/>
            <person name="Saftig P."/>
        </authorList>
    </citation>
    <scope>DISRUPTION PHENOTYPE</scope>
    <scope>FUNCTION</scope>
    <scope>TISSUE SPECIFICITY</scope>
</reference>
<reference key="10">
    <citation type="journal article" date="2002" name="Mol. Biol. Cell">
        <title>Role of LAMP-2 in lysosome biogenesis and autophagy.</title>
        <authorList>
            <person name="Eskelinen E.L."/>
            <person name="Illert A.L."/>
            <person name="Tanaka Y."/>
            <person name="Schwarzmann G."/>
            <person name="Blanz J."/>
            <person name="Von Figura K."/>
            <person name="Saftig P."/>
        </authorList>
    </citation>
    <scope>FUNCTION</scope>
    <scope>SUBCELLULAR LOCATION</scope>
</reference>
<reference key="11">
    <citation type="journal article" date="2010" name="Cell">
        <title>A tissue-specific atlas of mouse protein phosphorylation and expression.</title>
        <authorList>
            <person name="Huttlin E.L."/>
            <person name="Jedrychowski M.P."/>
            <person name="Elias J.E."/>
            <person name="Goswami T."/>
            <person name="Rad R."/>
            <person name="Beausoleil S.A."/>
            <person name="Villen J."/>
            <person name="Haas W."/>
            <person name="Sowa M.E."/>
            <person name="Gygi S.P."/>
        </authorList>
    </citation>
    <scope>IDENTIFICATION BY MASS SPECTROMETRY [LARGE SCALE ANALYSIS]</scope>
    <source>
        <tissue>Brain</tissue>
        <tissue>Brown adipose tissue</tissue>
        <tissue>Heart</tissue>
        <tissue>Kidney</tissue>
        <tissue>Liver</tissue>
        <tissue>Lung</tissue>
        <tissue>Pancreas</tissue>
        <tissue>Spleen</tissue>
        <tissue>Testis</tissue>
    </source>
</reference>
<reference key="12">
    <citation type="journal article" date="2012" name="J. Cell Sci.">
        <title>The lysosomal polypeptide transporter TAPL is stabilized by interaction with LAMP-1 and LAMP-2.</title>
        <authorList>
            <person name="Demirel O."/>
            <person name="Jan I."/>
            <person name="Wolters D."/>
            <person name="Blanz J."/>
            <person name="Saftig P."/>
            <person name="Tampe R."/>
            <person name="Abele R."/>
        </authorList>
    </citation>
    <scope>INTERACTION WITH ABCB9</scope>
</reference>
<reference key="13">
    <citation type="journal article" date="2016" name="Biol. Open">
        <title>LAMP-2 is required for incorporating syntaxin-17 into autophagosomes and for their fusion with lysosomes.</title>
        <authorList>
            <person name="Hubert V."/>
            <person name="Peschel A."/>
            <person name="Langer B."/>
            <person name="Groeger M."/>
            <person name="Rees A."/>
            <person name="Kain R."/>
        </authorList>
    </citation>
    <scope>FUNCTION</scope>
</reference>
<reference key="14">
    <citation type="journal article" date="2024" name="Bone Res.">
        <title>RUFY4 deletion prevents pathological bone loss by blocking endo-lysosomal trafficking of osteoclasts.</title>
        <authorList>
            <person name="Kim M."/>
            <person name="Park J.H."/>
            <person name="Go M."/>
            <person name="Lee N."/>
            <person name="Seo J."/>
            <person name="Lee H."/>
            <person name="Kim D."/>
            <person name="Ha H."/>
            <person name="Kim T."/>
            <person name="Jeong M.S."/>
            <person name="Kim S."/>
            <person name="Kim T."/>
            <person name="Kim H.S."/>
            <person name="Kang D."/>
            <person name="Shim H."/>
            <person name="Lee S.Y."/>
        </authorList>
    </citation>
    <scope>INTERACTION WITH RUFY4 AND RAB7A</scope>
</reference>
<reference evidence="17" key="15">
    <citation type="journal article" date="2016" name="Biochem. Biophys. Res. Commun.">
        <title>Lysosome-associated membrane proteins-1 and -2 (LAMP-1 and LAMP-2) assemble via distinct modes.</title>
        <authorList>
            <person name="Terasawa K."/>
            <person name="Tomabechi Y."/>
            <person name="Ikeda M."/>
            <person name="Ehara H."/>
            <person name="Kukimoto-Niino M."/>
            <person name="Wakiyama M."/>
            <person name="Podyma-Inoue K.A."/>
            <person name="Rajapakshe A.R."/>
            <person name="Watabe T."/>
            <person name="Shirouzu M."/>
            <person name="Hara-Yokoyama M."/>
        </authorList>
    </citation>
    <scope>X-RAY CRYSTALLOGRAPHY (2.10 ANGSTROMS) OF 26-189</scope>
    <scope>DISULFIDE BONDS</scope>
    <scope>GLYCOSYLATION AT ASN-29; ASN-45; ASN-57; ASN-97 AND ASN-115</scope>
</reference>
<comment type="function">
    <text evidence="1 6 8 11">Lysosomal membrane glycoprotein which plays an important role in lysosome biogenesis, lysosomal pH regulation and autophagy (PubMed:10972293). Acts as an important regulator of lysosomal lumen pH regulation by acting as a direct inhibitor of the proton channel TMEM175, facilitating lysosomal acidification for optimal hydrolase activity (By similarity). Plays an important role in chaperone-mediated autophagy, a process that mediates lysosomal degradation of proteins in response to various stresses and as part of the normal turnover of proteins with a long biological half-live (By similarity). Functions by binding target proteins, such as GAPDH, NLRP3 and MLLT11, and targeting them for lysosomal degradation (By similarity). In the chaperone-mediated autophagy, acts downstream of chaperones, such as HSPA8/HSC70, which recognize and bind substrate proteins and mediate their recruitment to lysosomes, where target proteins bind LAMP2 (By similarity). Plays a role in lysosomal protein degradation in response to starvation (PubMed:27628032). Required for the fusion of autophagosomes with lysosomes during autophagy (PubMed:27628032). Cells that lack LAMP2 express normal levels of VAMP8, but fail to accumulate STX17 on autophagosomes, which is the most likely explanation for the lack of fusion between autophagosomes and lysosomes (PubMed:27628032). Required for normal degradation of the contents of autophagosomes (PubMed:10972293, PubMed:12221139). Required for efficient MHC class II-mediated presentation of exogenous antigens via its function in lysosomal protein degradation; antigenic peptides generated by proteases in the endosomal/lysosomal compartment are captured by nascent MHC II subunits (By similarity). Is not required for efficient MHC class II-mediated presentation of endogenous antigens (By similarity).</text>
</comment>
<comment type="subunit">
    <text evidence="1 2 10 13">Monomer. Forms large homooligomers (By similarity). Interacts (via its cytoplasmic region) with HSPA8; HSPA8 mediates recruitment of proteins with a KFERQ motif to the surface of the lysosome for chaperone-mediated autophagy (By similarity). Interacts with HSP90 in the lysosome lumen; this enhances LAMP2 stability (By similarity). Interacts with MLLT11 (By similarity). Interacts with ABCB9 (PubMed:22641697). Interacts with FURIN (By similarity). Interacts with CT55; this interaction may be important for LAMP2 protein stability (By similarity). Interacts with TMEM175; inhibiting the proton channel activity of TMEM175 (By similarity). Forms a ternary complex with RAB7A and RUFY4 (via RUN domain); the interaction with RAB7A is mediated by RUFY4 (via RUN and coiled coil domains) (PubMed:38744829).</text>
</comment>
<comment type="subcellular location">
    <subcellularLocation>
        <location evidence="7 9">Lysosome membrane</location>
        <topology evidence="4">Single-pass type I membrane protein</topology>
    </subcellularLocation>
    <subcellularLocation>
        <location evidence="1">Endosome membrane</location>
        <topology evidence="4">Single-pass type I membrane protein</topology>
    </subcellularLocation>
    <subcellularLocation>
        <location evidence="8">Cytoplasmic vesicle</location>
        <location evidence="8">Autophagosome membrane</location>
    </subcellularLocation>
    <subcellularLocation>
        <location evidence="1">Cell membrane</location>
        <topology evidence="4">Single-pass type I membrane protein</topology>
    </subcellularLocation>
    <text evidence="1">This protein shuttles between lysosomes, endosomes, and the plasma membrane.</text>
</comment>
<comment type="alternative products">
    <event type="alternative splicing"/>
    <isoform>
        <id>P17047-1</id>
        <name>LAMP-2A</name>
        <sequence type="displayed"/>
    </isoform>
    <isoform>
        <id>P17047-2</id>
        <name>LAMP-2B</name>
        <sequence type="described" ref="VSP_003045"/>
    </isoform>
    <isoform>
        <id>P17047-3</id>
        <name>LAMP-2C</name>
        <sequence type="described" ref="VSP_003046"/>
    </isoform>
</comment>
<comment type="tissue specificity">
    <text evidence="6">Detected in liver and kidney (at protein level). Detected in liver and kidney.</text>
</comment>
<comment type="PTM">
    <text evidence="9">Extensively N-glycosylated. Contains a minor proportion of O-linked glycans.</text>
</comment>
<comment type="disruption phenotype">
    <text evidence="6">About half of the mutant mice die between 20 and 40 days after birth. Survivors are smaller, weigh 10 to 15 % less than their littermates, but show normal lifespan. Both mice that die early and long-time survivors display an accumulation of autophagic vacuoles in liver, pancreas, cardiac and skeletal muscle. Mutant mice display an increased ratio of heart weight to body weight and severely impaired contractile function of the heart muscle. Hepatocytes from mutant mice show a decreased rate of degradation of long-lived proteins.</text>
</comment>
<comment type="similarity">
    <text evidence="4">Belongs to the LAMP family.</text>
</comment>
<protein>
    <recommendedName>
        <fullName>Lysosome-associated membrane glycoprotein 2</fullName>
        <shortName>LAMP-2</shortName>
        <shortName>Lysosome-associated membrane protein 2</shortName>
    </recommendedName>
    <alternativeName>
        <fullName>CD107 antigen-like family member B</fullName>
    </alternativeName>
    <alternativeName>
        <fullName>Lysosomal membrane glycoprotein type B</fullName>
        <shortName>LGP-B</shortName>
    </alternativeName>
    <cdAntigenName>CD107b</cdAntigenName>
</protein>
<gene>
    <name type="primary">Lamp2</name>
    <name type="synonym">Lamp-2</name>
</gene>
<sequence>MCLSPVKGAKLILIFLFLGAVQSNALIVNLTDSKGTCLYAEWEMNFTITYETTNQTNKTITIAVPDKATHDGSSCGDDRNSAKIMIQFGFAVSWAVNFTKEASHYSIHDIVLSYNTSDSTVFPGAVAKGVHTVKNPENFKVPLDVIFKCNSVLTYNLTPVVQKYWGIHLQAFVQNGTVSKNEQVCEEDQTPTTVAPIIHTTAPSTTTTLTPTSTPTPTPTPTPTVGNYSIRNGNTTCLLATMGLQLNITEEKVPFIFNINPATTNFTGSCQPQSAQLRLNNSQIKYLDFIFAVKNEKRFYLKEVNVYMYLANGSAFNISNKNLSFWDAPLGSSYMCNKEQVLSVSRAFQINTFNLKVQPFNVTKGQYSTAQDCSADEDNFLVPIAVGAALGGVLILVLLAYFIGLKRHHTGYEQF</sequence>
<dbReference type="EMBL" id="J05287">
    <property type="protein sequence ID" value="AAA39412.1"/>
    <property type="molecule type" value="mRNA"/>
</dbReference>
<dbReference type="EMBL" id="AK159272">
    <property type="protein sequence ID" value="BAE34951.1"/>
    <property type="molecule type" value="mRNA"/>
</dbReference>
<dbReference type="EMBL" id="AK032974">
    <property type="protein sequence ID" value="BAC28106.1"/>
    <property type="molecule type" value="mRNA"/>
</dbReference>
<dbReference type="EMBL" id="AK163933">
    <property type="protein sequence ID" value="BAE37543.1"/>
    <property type="molecule type" value="mRNA"/>
</dbReference>
<dbReference type="EMBL" id="AL513356">
    <property type="status" value="NOT_ANNOTATED_CDS"/>
    <property type="molecule type" value="Genomic_DNA"/>
</dbReference>
<dbReference type="EMBL" id="CH466570">
    <property type="protein sequence ID" value="EDL29016.1"/>
    <property type="molecule type" value="Genomic_DNA"/>
</dbReference>
<dbReference type="EMBL" id="CH466570">
    <property type="protein sequence ID" value="EDL29018.1"/>
    <property type="molecule type" value="Genomic_DNA"/>
</dbReference>
<dbReference type="EMBL" id="BC138718">
    <property type="protein sequence ID" value="AAI38719.1"/>
    <property type="molecule type" value="mRNA"/>
</dbReference>
<dbReference type="EMBL" id="BC138723">
    <property type="protein sequence ID" value="AAI38724.1"/>
    <property type="molecule type" value="mRNA"/>
</dbReference>
<dbReference type="EMBL" id="M32017">
    <property type="protein sequence ID" value="AAA39429.1"/>
    <property type="molecule type" value="mRNA"/>
</dbReference>
<dbReference type="EMBL" id="M32018">
    <property type="protein sequence ID" value="AAA39430.1"/>
    <property type="molecule type" value="Genomic_DNA"/>
</dbReference>
<dbReference type="CCDS" id="CCDS30092.1">
    <molecule id="P17047-1"/>
</dbReference>
<dbReference type="CCDS" id="CCDS30093.1">
    <molecule id="P17047-3"/>
</dbReference>
<dbReference type="CCDS" id="CCDS72369.1">
    <molecule id="P17047-2"/>
</dbReference>
<dbReference type="PIR" id="A35560">
    <property type="entry name" value="A35560"/>
</dbReference>
<dbReference type="RefSeq" id="NP_001017959.1">
    <molecule id="P17047-1"/>
    <property type="nucleotide sequence ID" value="NM_001017959.2"/>
</dbReference>
<dbReference type="RefSeq" id="NP_001277414.1">
    <molecule id="P17047-2"/>
    <property type="nucleotide sequence ID" value="NM_001290485.2"/>
</dbReference>
<dbReference type="RefSeq" id="NP_034815.2">
    <molecule id="P17047-3"/>
    <property type="nucleotide sequence ID" value="NM_010685.4"/>
</dbReference>
<dbReference type="PDB" id="5GV3">
    <property type="method" value="X-ray"/>
    <property type="resolution" value="2.10 A"/>
    <property type="chains" value="A/B=26-189"/>
</dbReference>
<dbReference type="PDBsum" id="5GV3"/>
<dbReference type="SMR" id="P17047"/>
<dbReference type="BioGRID" id="201106">
    <property type="interactions" value="36"/>
</dbReference>
<dbReference type="FunCoup" id="P17047">
    <property type="interactions" value="1696"/>
</dbReference>
<dbReference type="IntAct" id="P17047">
    <property type="interactions" value="7"/>
</dbReference>
<dbReference type="MINT" id="P17047"/>
<dbReference type="STRING" id="10090.ENSMUSP00000074448"/>
<dbReference type="ChEMBL" id="CHEMBL4630812"/>
<dbReference type="GlyConnect" id="2495">
    <property type="glycosylation" value="10 N-Linked glycans (6 sites)"/>
</dbReference>
<dbReference type="GlyCosmos" id="P17047">
    <property type="glycosylation" value="17 sites, 10 glycans"/>
</dbReference>
<dbReference type="GlyGen" id="P17047">
    <property type="glycosylation" value="22 sites, 19 N-linked glycans (11 sites), 1 O-linked glycan (1 site)"/>
</dbReference>
<dbReference type="iPTMnet" id="P17047"/>
<dbReference type="PhosphoSitePlus" id="P17047"/>
<dbReference type="SwissPalm" id="P17047"/>
<dbReference type="jPOST" id="P17047"/>
<dbReference type="PaxDb" id="10090-ENSMUSP00000052283"/>
<dbReference type="PeptideAtlas" id="P17047"/>
<dbReference type="ProteomicsDB" id="263697">
    <molecule id="P17047-1"/>
</dbReference>
<dbReference type="ProteomicsDB" id="263698">
    <molecule id="P17047-2"/>
</dbReference>
<dbReference type="ProteomicsDB" id="263699">
    <molecule id="P17047-3"/>
</dbReference>
<dbReference type="Pumba" id="P17047"/>
<dbReference type="ABCD" id="P17047">
    <property type="antibodies" value="13 sequenced antibodies"/>
</dbReference>
<dbReference type="Antibodypedia" id="3938">
    <property type="antibodies" value="1320 antibodies from 52 providers"/>
</dbReference>
<dbReference type="DNASU" id="16784"/>
<dbReference type="Ensembl" id="ENSMUST00000016678.14">
    <molecule id="P17047-1"/>
    <property type="protein sequence ID" value="ENSMUSP00000016678.8"/>
    <property type="gene ID" value="ENSMUSG00000016534.16"/>
</dbReference>
<dbReference type="Ensembl" id="ENSMUST00000061755.9">
    <molecule id="P17047-3"/>
    <property type="protein sequence ID" value="ENSMUSP00000052283.9"/>
    <property type="gene ID" value="ENSMUSG00000016534.16"/>
</dbReference>
<dbReference type="Ensembl" id="ENSMUST00000074913.12">
    <molecule id="P17047-2"/>
    <property type="protein sequence ID" value="ENSMUSP00000074448.6"/>
    <property type="gene ID" value="ENSMUSG00000016534.16"/>
</dbReference>
<dbReference type="GeneID" id="16784"/>
<dbReference type="KEGG" id="mmu:16784"/>
<dbReference type="UCSC" id="uc009szw.2">
    <molecule id="P17047-1"/>
    <property type="organism name" value="mouse"/>
</dbReference>
<dbReference type="UCSC" id="uc009szx.2">
    <molecule id="P17047-3"/>
    <property type="organism name" value="mouse"/>
</dbReference>
<dbReference type="AGR" id="MGI:96748"/>
<dbReference type="CTD" id="3920"/>
<dbReference type="MGI" id="MGI:96748">
    <property type="gene designation" value="Lamp2"/>
</dbReference>
<dbReference type="VEuPathDB" id="HostDB:ENSMUSG00000016534"/>
<dbReference type="eggNOG" id="KOG4818">
    <property type="taxonomic scope" value="Eukaryota"/>
</dbReference>
<dbReference type="GeneTree" id="ENSGT00950000182899"/>
<dbReference type="HOGENOM" id="CLU_055379_2_0_1"/>
<dbReference type="InParanoid" id="P17047"/>
<dbReference type="OMA" id="CHPQTAQ"/>
<dbReference type="OrthoDB" id="6232933at2759"/>
<dbReference type="TreeFam" id="TF316339"/>
<dbReference type="Reactome" id="R-MMU-114608">
    <property type="pathway name" value="Platelet degranulation"/>
</dbReference>
<dbReference type="Reactome" id="R-MMU-6798695">
    <property type="pathway name" value="Neutrophil degranulation"/>
</dbReference>
<dbReference type="BioGRID-ORCS" id="16784">
    <property type="hits" value="0 hits in 77 CRISPR screens"/>
</dbReference>
<dbReference type="ChiTaRS" id="Lamp2">
    <property type="organism name" value="mouse"/>
</dbReference>
<dbReference type="PRO" id="PR:P17047"/>
<dbReference type="Proteomes" id="UP000000589">
    <property type="component" value="Chromosome X"/>
</dbReference>
<dbReference type="RNAct" id="P17047">
    <property type="molecule type" value="protein"/>
</dbReference>
<dbReference type="Bgee" id="ENSMUSG00000016534">
    <property type="expression patterns" value="Expressed in ciliary body and 261 other cell types or tissues"/>
</dbReference>
<dbReference type="ExpressionAtlas" id="P17047">
    <property type="expression patterns" value="baseline and differential"/>
</dbReference>
<dbReference type="GO" id="GO:0044754">
    <property type="term" value="C:autolysosome"/>
    <property type="evidence" value="ECO:0000266"/>
    <property type="project" value="MGI"/>
</dbReference>
<dbReference type="GO" id="GO:0000421">
    <property type="term" value="C:autophagosome membrane"/>
    <property type="evidence" value="ECO:0000314"/>
    <property type="project" value="UniProtKB"/>
</dbReference>
<dbReference type="GO" id="GO:0061742">
    <property type="term" value="C:chaperone-mediated autophagy translocation complex"/>
    <property type="evidence" value="ECO:0000250"/>
    <property type="project" value="ParkinsonsUK-UCL"/>
</dbReference>
<dbReference type="GO" id="GO:0070062">
    <property type="term" value="C:extracellular exosome"/>
    <property type="evidence" value="ECO:0007669"/>
    <property type="project" value="Ensembl"/>
</dbReference>
<dbReference type="GO" id="GO:0005770">
    <property type="term" value="C:late endosome"/>
    <property type="evidence" value="ECO:0000314"/>
    <property type="project" value="MGI"/>
</dbReference>
<dbReference type="GO" id="GO:0031902">
    <property type="term" value="C:late endosome membrane"/>
    <property type="evidence" value="ECO:0000314"/>
    <property type="project" value="MGI"/>
</dbReference>
<dbReference type="GO" id="GO:1990836">
    <property type="term" value="C:lysosomal matrix"/>
    <property type="evidence" value="ECO:0000266"/>
    <property type="project" value="MGI"/>
</dbReference>
<dbReference type="GO" id="GO:0005765">
    <property type="term" value="C:lysosomal membrane"/>
    <property type="evidence" value="ECO:0000314"/>
    <property type="project" value="BHF-UCL"/>
</dbReference>
<dbReference type="GO" id="GO:0005764">
    <property type="term" value="C:lysosome"/>
    <property type="evidence" value="ECO:0000314"/>
    <property type="project" value="MGI"/>
</dbReference>
<dbReference type="GO" id="GO:0016020">
    <property type="term" value="C:membrane"/>
    <property type="evidence" value="ECO:0000266"/>
    <property type="project" value="MGI"/>
</dbReference>
<dbReference type="GO" id="GO:0030670">
    <property type="term" value="C:phagocytic vesicle membrane"/>
    <property type="evidence" value="ECO:0000315"/>
    <property type="project" value="MGI"/>
</dbReference>
<dbReference type="GO" id="GO:0005886">
    <property type="term" value="C:plasma membrane"/>
    <property type="evidence" value="ECO:0007669"/>
    <property type="project" value="UniProtKB-SubCell"/>
</dbReference>
<dbReference type="GO" id="GO:0031088">
    <property type="term" value="C:platelet dense granule membrane"/>
    <property type="evidence" value="ECO:0000266"/>
    <property type="project" value="MGI"/>
</dbReference>
<dbReference type="GO" id="GO:0019899">
    <property type="term" value="F:enzyme binding"/>
    <property type="evidence" value="ECO:0007669"/>
    <property type="project" value="Ensembl"/>
</dbReference>
<dbReference type="GO" id="GO:0008200">
    <property type="term" value="F:ion channel inhibitor activity"/>
    <property type="evidence" value="ECO:0000250"/>
    <property type="project" value="UniProtKB"/>
</dbReference>
<dbReference type="GO" id="GO:0019904">
    <property type="term" value="F:protein domain specific binding"/>
    <property type="evidence" value="ECO:0000353"/>
    <property type="project" value="UniProtKB"/>
</dbReference>
<dbReference type="GO" id="GO:0097352">
    <property type="term" value="P:autophagosome maturation"/>
    <property type="evidence" value="ECO:0000315"/>
    <property type="project" value="UniProtKB"/>
</dbReference>
<dbReference type="GO" id="GO:0006914">
    <property type="term" value="P:autophagy"/>
    <property type="evidence" value="ECO:0000315"/>
    <property type="project" value="UniProtKB"/>
</dbReference>
<dbReference type="GO" id="GO:0009267">
    <property type="term" value="P:cellular response to starvation"/>
    <property type="evidence" value="ECO:0000315"/>
    <property type="project" value="UniProtKB"/>
</dbReference>
<dbReference type="GO" id="GO:0061684">
    <property type="term" value="P:chaperone-mediated autophagy"/>
    <property type="evidence" value="ECO:0000315"/>
    <property type="project" value="UniProtKB"/>
</dbReference>
<dbReference type="GO" id="GO:0007042">
    <property type="term" value="P:lysosomal lumen acidification"/>
    <property type="evidence" value="ECO:0000250"/>
    <property type="project" value="UniProtKB"/>
</dbReference>
<dbReference type="GO" id="GO:1905146">
    <property type="term" value="P:lysosomal protein catabolic process"/>
    <property type="evidence" value="ECO:0000250"/>
    <property type="project" value="UniProtKB"/>
</dbReference>
<dbReference type="GO" id="GO:0046716">
    <property type="term" value="P:muscle cell cellular homeostasis"/>
    <property type="evidence" value="ECO:0000315"/>
    <property type="project" value="MGI"/>
</dbReference>
<dbReference type="GO" id="GO:0050821">
    <property type="term" value="P:protein stabilization"/>
    <property type="evidence" value="ECO:0000315"/>
    <property type="project" value="UniProtKB"/>
</dbReference>
<dbReference type="GO" id="GO:0006605">
    <property type="term" value="P:protein targeting"/>
    <property type="evidence" value="ECO:0000315"/>
    <property type="project" value="UniProtKB"/>
</dbReference>
<dbReference type="GO" id="GO:0061740">
    <property type="term" value="P:protein targeting to lysosome involved in chaperone-mediated autophagy"/>
    <property type="evidence" value="ECO:0000315"/>
    <property type="project" value="UniProtKB"/>
</dbReference>
<dbReference type="FunFam" id="2.40.160.110:FF:000004">
    <property type="entry name" value="Lysosomal associated membrane protein 2"/>
    <property type="match status" value="1"/>
</dbReference>
<dbReference type="FunFam" id="2.40.160.110:FF:000001">
    <property type="entry name" value="lysosome-associated membrane glycoprotein 2 isoform X2"/>
    <property type="match status" value="1"/>
</dbReference>
<dbReference type="Gene3D" id="2.40.160.110">
    <property type="match status" value="2"/>
</dbReference>
<dbReference type="InterPro" id="IPR048528">
    <property type="entry name" value="Lamp2-like_luminal"/>
</dbReference>
<dbReference type="InterPro" id="IPR048524">
    <property type="entry name" value="Lamp2-like_TM"/>
</dbReference>
<dbReference type="InterPro" id="IPR018134">
    <property type="entry name" value="LAMP_CS"/>
</dbReference>
<dbReference type="InterPro" id="IPR002000">
    <property type="entry name" value="Lysosome-assoc_membr_glycop"/>
</dbReference>
<dbReference type="PANTHER" id="PTHR11506">
    <property type="entry name" value="LYSOSOME-ASSOCIATED MEMBRANE GLYCOPROTEIN"/>
    <property type="match status" value="1"/>
</dbReference>
<dbReference type="PANTHER" id="PTHR11506:SF35">
    <property type="entry name" value="LYSOSOME-ASSOCIATED MEMBRANE GLYCOPROTEIN 5"/>
    <property type="match status" value="1"/>
</dbReference>
<dbReference type="Pfam" id="PF01299">
    <property type="entry name" value="Lamp2-like_luminal"/>
    <property type="match status" value="2"/>
</dbReference>
<dbReference type="Pfam" id="PF21222">
    <property type="entry name" value="Lamp2_2nd"/>
    <property type="match status" value="1"/>
</dbReference>
<dbReference type="PRINTS" id="PR00336">
    <property type="entry name" value="LYSASSOCTDMP"/>
</dbReference>
<dbReference type="PROSITE" id="PS00310">
    <property type="entry name" value="LAMP_1"/>
    <property type="match status" value="1"/>
</dbReference>
<dbReference type="PROSITE" id="PS00311">
    <property type="entry name" value="LAMP_2"/>
    <property type="match status" value="1"/>
</dbReference>
<dbReference type="PROSITE" id="PS51407">
    <property type="entry name" value="LAMP_3"/>
    <property type="match status" value="1"/>
</dbReference>